<feature type="signal peptide" evidence="2">
    <location>
        <begin position="1"/>
        <end position="27"/>
    </location>
</feature>
<feature type="chain" id="PRO_5000061325" description="Protocadherin 18">
    <location>
        <begin position="28"/>
        <end position="1134"/>
    </location>
</feature>
<feature type="topological domain" description="Extracellular" evidence="2">
    <location>
        <begin position="28"/>
        <end position="699"/>
    </location>
</feature>
<feature type="transmembrane region" description="Helical" evidence="2">
    <location>
        <begin position="700"/>
        <end position="720"/>
    </location>
</feature>
<feature type="topological domain" description="Cytoplasmic" evidence="2">
    <location>
        <begin position="721"/>
        <end position="1134"/>
    </location>
</feature>
<feature type="domain" description="Cadherin 1" evidence="3">
    <location>
        <begin position="28"/>
        <end position="137"/>
    </location>
</feature>
<feature type="domain" description="Cadherin 2" evidence="3">
    <location>
        <begin position="138"/>
        <end position="246"/>
    </location>
</feature>
<feature type="domain" description="Cadherin 3" evidence="3">
    <location>
        <begin position="247"/>
        <end position="354"/>
    </location>
</feature>
<feature type="domain" description="Cadherin 4" evidence="3">
    <location>
        <begin position="361"/>
        <end position="465"/>
    </location>
</feature>
<feature type="domain" description="Cadherin 5" evidence="3">
    <location>
        <begin position="466"/>
        <end position="576"/>
    </location>
</feature>
<feature type="domain" description="Cadherin 6" evidence="3">
    <location>
        <begin position="582"/>
        <end position="688"/>
    </location>
</feature>
<feature type="region of interest" description="Disordered" evidence="4">
    <location>
        <begin position="769"/>
        <end position="800"/>
    </location>
</feature>
<feature type="region of interest" description="Disordered" evidence="4">
    <location>
        <begin position="868"/>
        <end position="888"/>
    </location>
</feature>
<feature type="region of interest" description="Interaction with DAB1" evidence="5">
    <location>
        <begin position="892"/>
        <end position="1134"/>
    </location>
</feature>
<feature type="region of interest" description="Disordered" evidence="4">
    <location>
        <begin position="941"/>
        <end position="1004"/>
    </location>
</feature>
<feature type="region of interest" description="Disordered" evidence="4">
    <location>
        <begin position="1022"/>
        <end position="1083"/>
    </location>
</feature>
<feature type="compositionally biased region" description="Polar residues" evidence="4">
    <location>
        <begin position="791"/>
        <end position="800"/>
    </location>
</feature>
<feature type="compositionally biased region" description="Basic and acidic residues" evidence="4">
    <location>
        <begin position="868"/>
        <end position="877"/>
    </location>
</feature>
<feature type="compositionally biased region" description="Basic and acidic residues" evidence="4">
    <location>
        <begin position="1027"/>
        <end position="1038"/>
    </location>
</feature>
<feature type="compositionally biased region" description="Polar residues" evidence="4">
    <location>
        <begin position="1059"/>
        <end position="1082"/>
    </location>
</feature>
<feature type="glycosylation site" description="N-linked (GlcNAc...) asparagine" evidence="2">
    <location>
        <position position="103"/>
    </location>
</feature>
<feature type="glycosylation site" description="N-linked (GlcNAc...) asparagine" evidence="2">
    <location>
        <position position="269"/>
    </location>
</feature>
<feature type="glycosylation site" description="N-linked (GlcNAc...) asparagine" evidence="2">
    <location>
        <position position="559"/>
    </location>
</feature>
<feature type="sequence conflict" description="In Ref. 1; AAL47095, 2; BAD32482 and 4; AAH52198." evidence="6" ref="1 2 4">
    <original>A</original>
    <variation>T</variation>
    <location>
        <position position="650"/>
    </location>
</feature>
<feature type="sequence conflict" description="In Ref. 2; BAD32482 and 4; AAH52198." evidence="6" ref="2 4">
    <original>S</original>
    <variation>N</variation>
    <location>
        <position position="1066"/>
    </location>
</feature>
<dbReference type="EMBL" id="AF416735">
    <property type="protein sequence ID" value="AAL47095.1"/>
    <property type="molecule type" value="mRNA"/>
</dbReference>
<dbReference type="EMBL" id="AK173204">
    <property type="protein sequence ID" value="BAD32482.1"/>
    <property type="status" value="ALT_INIT"/>
    <property type="molecule type" value="mRNA"/>
</dbReference>
<dbReference type="EMBL" id="AK036560">
    <property type="protein sequence ID" value="BAC29477.1"/>
    <property type="molecule type" value="mRNA"/>
</dbReference>
<dbReference type="EMBL" id="BC052198">
    <property type="protein sequence ID" value="AAH52198.1"/>
    <property type="molecule type" value="mRNA"/>
</dbReference>
<dbReference type="CCDS" id="CCDS17334.1"/>
<dbReference type="RefSeq" id="NP_569715.3">
    <property type="nucleotide sequence ID" value="NM_130448.3"/>
</dbReference>
<dbReference type="SMR" id="Q8VHR0"/>
<dbReference type="BioGRID" id="215816">
    <property type="interactions" value="2"/>
</dbReference>
<dbReference type="FunCoup" id="Q8VHR0">
    <property type="interactions" value="943"/>
</dbReference>
<dbReference type="IntAct" id="Q8VHR0">
    <property type="interactions" value="2"/>
</dbReference>
<dbReference type="STRING" id="10090.ENSMUSP00000039245"/>
<dbReference type="GlyCosmos" id="Q8VHR0">
    <property type="glycosylation" value="3 sites, No reported glycans"/>
</dbReference>
<dbReference type="GlyGen" id="Q8VHR0">
    <property type="glycosylation" value="3 sites"/>
</dbReference>
<dbReference type="iPTMnet" id="Q8VHR0"/>
<dbReference type="PhosphoSitePlus" id="Q8VHR0"/>
<dbReference type="CPTAC" id="non-CPTAC-4050"/>
<dbReference type="jPOST" id="Q8VHR0"/>
<dbReference type="PaxDb" id="10090-ENSMUSP00000039245"/>
<dbReference type="ProteomicsDB" id="294342"/>
<dbReference type="Pumba" id="Q8VHR0"/>
<dbReference type="Antibodypedia" id="2719">
    <property type="antibodies" value="98 antibodies from 22 providers"/>
</dbReference>
<dbReference type="DNASU" id="73173"/>
<dbReference type="Ensembl" id="ENSMUST00000035931.13">
    <property type="protein sequence ID" value="ENSMUSP00000039245.8"/>
    <property type="gene ID" value="ENSMUSG00000037892.14"/>
</dbReference>
<dbReference type="GeneID" id="73173"/>
<dbReference type="KEGG" id="mmu:73173"/>
<dbReference type="UCSC" id="uc008pdg.2">
    <property type="organism name" value="mouse"/>
</dbReference>
<dbReference type="AGR" id="MGI:1920423"/>
<dbReference type="CTD" id="54510"/>
<dbReference type="MGI" id="MGI:1920423">
    <property type="gene designation" value="Pcdh18"/>
</dbReference>
<dbReference type="VEuPathDB" id="HostDB:ENSMUSG00000037892"/>
<dbReference type="eggNOG" id="KOG3594">
    <property type="taxonomic scope" value="Eukaryota"/>
</dbReference>
<dbReference type="GeneTree" id="ENSGT00940000156295"/>
<dbReference type="InParanoid" id="Q8VHR0"/>
<dbReference type="OMA" id="CWMPPLL"/>
<dbReference type="OrthoDB" id="6252479at2759"/>
<dbReference type="PhylomeDB" id="Q8VHR0"/>
<dbReference type="TreeFam" id="TF352008"/>
<dbReference type="BioGRID-ORCS" id="73173">
    <property type="hits" value="6 hits in 79 CRISPR screens"/>
</dbReference>
<dbReference type="PRO" id="PR:Q8VHR0"/>
<dbReference type="Proteomes" id="UP000000589">
    <property type="component" value="Chromosome 3"/>
</dbReference>
<dbReference type="RNAct" id="Q8VHR0">
    <property type="molecule type" value="protein"/>
</dbReference>
<dbReference type="Bgee" id="ENSMUSG00000037892">
    <property type="expression patterns" value="Expressed in manus and 222 other cell types or tissues"/>
</dbReference>
<dbReference type="ExpressionAtlas" id="Q8VHR0">
    <property type="expression patterns" value="baseline and differential"/>
</dbReference>
<dbReference type="GO" id="GO:0005886">
    <property type="term" value="C:plasma membrane"/>
    <property type="evidence" value="ECO:0000303"/>
    <property type="project" value="UniProtKB"/>
</dbReference>
<dbReference type="GO" id="GO:0005509">
    <property type="term" value="F:calcium ion binding"/>
    <property type="evidence" value="ECO:0000303"/>
    <property type="project" value="UniProtKB"/>
</dbReference>
<dbReference type="GO" id="GO:0007420">
    <property type="term" value="P:brain development"/>
    <property type="evidence" value="ECO:0000270"/>
    <property type="project" value="UniProtKB"/>
</dbReference>
<dbReference type="GO" id="GO:0016339">
    <property type="term" value="P:calcium-dependent cell-cell adhesion via plasma membrane cell adhesion molecules"/>
    <property type="evidence" value="ECO:0000266"/>
    <property type="project" value="MGI"/>
</dbReference>
<dbReference type="GO" id="GO:0007156">
    <property type="term" value="P:homophilic cell adhesion via plasma membrane adhesion molecules"/>
    <property type="evidence" value="ECO:0000303"/>
    <property type="project" value="UniProtKB"/>
</dbReference>
<dbReference type="CDD" id="cd11304">
    <property type="entry name" value="Cadherin_repeat"/>
    <property type="match status" value="6"/>
</dbReference>
<dbReference type="FunFam" id="2.60.40.60:FF:000001">
    <property type="entry name" value="Protocadherin alpha 2"/>
    <property type="match status" value="1"/>
</dbReference>
<dbReference type="FunFam" id="2.60.40.60:FF:000002">
    <property type="entry name" value="Protocadherin alpha 2"/>
    <property type="match status" value="1"/>
</dbReference>
<dbReference type="FunFam" id="2.60.40.60:FF:000003">
    <property type="entry name" value="Protocadherin alpha 2"/>
    <property type="match status" value="1"/>
</dbReference>
<dbReference type="FunFam" id="2.60.40.60:FF:000007">
    <property type="entry name" value="Protocadherin alpha 2"/>
    <property type="match status" value="1"/>
</dbReference>
<dbReference type="FunFam" id="2.60.40.60:FF:000103">
    <property type="entry name" value="protocadherin-18 isoform X2"/>
    <property type="match status" value="1"/>
</dbReference>
<dbReference type="FunFam" id="2.60.40.60:FF:000133">
    <property type="entry name" value="protocadherin-18 isoform X2"/>
    <property type="match status" value="1"/>
</dbReference>
<dbReference type="Gene3D" id="2.60.40.60">
    <property type="entry name" value="Cadherins"/>
    <property type="match status" value="6"/>
</dbReference>
<dbReference type="InterPro" id="IPR002126">
    <property type="entry name" value="Cadherin-like_dom"/>
</dbReference>
<dbReference type="InterPro" id="IPR015919">
    <property type="entry name" value="Cadherin-like_sf"/>
</dbReference>
<dbReference type="InterPro" id="IPR020894">
    <property type="entry name" value="Cadherin_CS"/>
</dbReference>
<dbReference type="InterPro" id="IPR013164">
    <property type="entry name" value="Cadherin_N"/>
</dbReference>
<dbReference type="InterPro" id="IPR050174">
    <property type="entry name" value="Protocadherin/Cadherin-CA"/>
</dbReference>
<dbReference type="PANTHER" id="PTHR24028">
    <property type="entry name" value="CADHERIN-87A"/>
    <property type="match status" value="1"/>
</dbReference>
<dbReference type="PANTHER" id="PTHR24028:SF9">
    <property type="entry name" value="PROTOCADHERIN-18"/>
    <property type="match status" value="1"/>
</dbReference>
<dbReference type="Pfam" id="PF00028">
    <property type="entry name" value="Cadherin"/>
    <property type="match status" value="5"/>
</dbReference>
<dbReference type="Pfam" id="PF08266">
    <property type="entry name" value="Cadherin_2"/>
    <property type="match status" value="1"/>
</dbReference>
<dbReference type="PRINTS" id="PR00205">
    <property type="entry name" value="CADHERIN"/>
</dbReference>
<dbReference type="SMART" id="SM00112">
    <property type="entry name" value="CA"/>
    <property type="match status" value="6"/>
</dbReference>
<dbReference type="SUPFAM" id="SSF49313">
    <property type="entry name" value="Cadherin-like"/>
    <property type="match status" value="5"/>
</dbReference>
<dbReference type="PROSITE" id="PS00232">
    <property type="entry name" value="CADHERIN_1"/>
    <property type="match status" value="5"/>
</dbReference>
<dbReference type="PROSITE" id="PS50268">
    <property type="entry name" value="CADHERIN_2"/>
    <property type="match status" value="6"/>
</dbReference>
<protein>
    <recommendedName>
        <fullName>Protocadherin 18</fullName>
    </recommendedName>
</protein>
<reference key="1">
    <citation type="journal article" date="2001" name="Biochem. Biophys. Res. Commun.">
        <title>Disabled-1 interacts with a novel developmentally regulated protocadherin.</title>
        <authorList>
            <person name="Homayouni R."/>
            <person name="Rice D.S."/>
            <person name="Curran T."/>
        </authorList>
    </citation>
    <scope>NUCLEOTIDE SEQUENCE [MRNA]</scope>
    <scope>INTERACTION WITH DAB1</scope>
    <scope>TISSUE SPECIFICITY</scope>
    <scope>DEVELOPMENTAL STAGE</scope>
    <source>
        <tissue>Head</tissue>
    </source>
</reference>
<reference key="2">
    <citation type="journal article" date="2004" name="DNA Res.">
        <title>Prediction of the coding sequences of mouse homologues of KIAA gene: IV. The complete nucleotide sequences of 500 mouse KIAA-homologous cDNAs identified by screening of terminal sequences of cDNA clones randomly sampled from size-fractionated libraries.</title>
        <authorList>
            <person name="Okazaki N."/>
            <person name="Kikuno R."/>
            <person name="Ohara R."/>
            <person name="Inamoto S."/>
            <person name="Koseki H."/>
            <person name="Hiraoka S."/>
            <person name="Saga Y."/>
            <person name="Seino S."/>
            <person name="Nishimura M."/>
            <person name="Kaisho T."/>
            <person name="Hoshino K."/>
            <person name="Kitamura H."/>
            <person name="Nagase T."/>
            <person name="Ohara O."/>
            <person name="Koga H."/>
        </authorList>
    </citation>
    <scope>NUCLEOTIDE SEQUENCE [LARGE SCALE MRNA]</scope>
    <source>
        <tissue>Fetal brain</tissue>
    </source>
</reference>
<reference key="3">
    <citation type="journal article" date="2005" name="Science">
        <title>The transcriptional landscape of the mammalian genome.</title>
        <authorList>
            <person name="Carninci P."/>
            <person name="Kasukawa T."/>
            <person name="Katayama S."/>
            <person name="Gough J."/>
            <person name="Frith M.C."/>
            <person name="Maeda N."/>
            <person name="Oyama R."/>
            <person name="Ravasi T."/>
            <person name="Lenhard B."/>
            <person name="Wells C."/>
            <person name="Kodzius R."/>
            <person name="Shimokawa K."/>
            <person name="Bajic V.B."/>
            <person name="Brenner S.E."/>
            <person name="Batalov S."/>
            <person name="Forrest A.R."/>
            <person name="Zavolan M."/>
            <person name="Davis M.J."/>
            <person name="Wilming L.G."/>
            <person name="Aidinis V."/>
            <person name="Allen J.E."/>
            <person name="Ambesi-Impiombato A."/>
            <person name="Apweiler R."/>
            <person name="Aturaliya R.N."/>
            <person name="Bailey T.L."/>
            <person name="Bansal M."/>
            <person name="Baxter L."/>
            <person name="Beisel K.W."/>
            <person name="Bersano T."/>
            <person name="Bono H."/>
            <person name="Chalk A.M."/>
            <person name="Chiu K.P."/>
            <person name="Choudhary V."/>
            <person name="Christoffels A."/>
            <person name="Clutterbuck D.R."/>
            <person name="Crowe M.L."/>
            <person name="Dalla E."/>
            <person name="Dalrymple B.P."/>
            <person name="de Bono B."/>
            <person name="Della Gatta G."/>
            <person name="di Bernardo D."/>
            <person name="Down T."/>
            <person name="Engstrom P."/>
            <person name="Fagiolini M."/>
            <person name="Faulkner G."/>
            <person name="Fletcher C.F."/>
            <person name="Fukushima T."/>
            <person name="Furuno M."/>
            <person name="Futaki S."/>
            <person name="Gariboldi M."/>
            <person name="Georgii-Hemming P."/>
            <person name="Gingeras T.R."/>
            <person name="Gojobori T."/>
            <person name="Green R.E."/>
            <person name="Gustincich S."/>
            <person name="Harbers M."/>
            <person name="Hayashi Y."/>
            <person name="Hensch T.K."/>
            <person name="Hirokawa N."/>
            <person name="Hill D."/>
            <person name="Huminiecki L."/>
            <person name="Iacono M."/>
            <person name="Ikeo K."/>
            <person name="Iwama A."/>
            <person name="Ishikawa T."/>
            <person name="Jakt M."/>
            <person name="Kanapin A."/>
            <person name="Katoh M."/>
            <person name="Kawasawa Y."/>
            <person name="Kelso J."/>
            <person name="Kitamura H."/>
            <person name="Kitano H."/>
            <person name="Kollias G."/>
            <person name="Krishnan S.P."/>
            <person name="Kruger A."/>
            <person name="Kummerfeld S.K."/>
            <person name="Kurochkin I.V."/>
            <person name="Lareau L.F."/>
            <person name="Lazarevic D."/>
            <person name="Lipovich L."/>
            <person name="Liu J."/>
            <person name="Liuni S."/>
            <person name="McWilliam S."/>
            <person name="Madan Babu M."/>
            <person name="Madera M."/>
            <person name="Marchionni L."/>
            <person name="Matsuda H."/>
            <person name="Matsuzawa S."/>
            <person name="Miki H."/>
            <person name="Mignone F."/>
            <person name="Miyake S."/>
            <person name="Morris K."/>
            <person name="Mottagui-Tabar S."/>
            <person name="Mulder N."/>
            <person name="Nakano N."/>
            <person name="Nakauchi H."/>
            <person name="Ng P."/>
            <person name="Nilsson R."/>
            <person name="Nishiguchi S."/>
            <person name="Nishikawa S."/>
            <person name="Nori F."/>
            <person name="Ohara O."/>
            <person name="Okazaki Y."/>
            <person name="Orlando V."/>
            <person name="Pang K.C."/>
            <person name="Pavan W.J."/>
            <person name="Pavesi G."/>
            <person name="Pesole G."/>
            <person name="Petrovsky N."/>
            <person name="Piazza S."/>
            <person name="Reed J."/>
            <person name="Reid J.F."/>
            <person name="Ring B.Z."/>
            <person name="Ringwald M."/>
            <person name="Rost B."/>
            <person name="Ruan Y."/>
            <person name="Salzberg S.L."/>
            <person name="Sandelin A."/>
            <person name="Schneider C."/>
            <person name="Schoenbach C."/>
            <person name="Sekiguchi K."/>
            <person name="Semple C.A."/>
            <person name="Seno S."/>
            <person name="Sessa L."/>
            <person name="Sheng Y."/>
            <person name="Shibata Y."/>
            <person name="Shimada H."/>
            <person name="Shimada K."/>
            <person name="Silva D."/>
            <person name="Sinclair B."/>
            <person name="Sperling S."/>
            <person name="Stupka E."/>
            <person name="Sugiura K."/>
            <person name="Sultana R."/>
            <person name="Takenaka Y."/>
            <person name="Taki K."/>
            <person name="Tammoja K."/>
            <person name="Tan S.L."/>
            <person name="Tang S."/>
            <person name="Taylor M.S."/>
            <person name="Tegner J."/>
            <person name="Teichmann S.A."/>
            <person name="Ueda H.R."/>
            <person name="van Nimwegen E."/>
            <person name="Verardo R."/>
            <person name="Wei C.L."/>
            <person name="Yagi K."/>
            <person name="Yamanishi H."/>
            <person name="Zabarovsky E."/>
            <person name="Zhu S."/>
            <person name="Zimmer A."/>
            <person name="Hide W."/>
            <person name="Bult C."/>
            <person name="Grimmond S.M."/>
            <person name="Teasdale R.D."/>
            <person name="Liu E.T."/>
            <person name="Brusic V."/>
            <person name="Quackenbush J."/>
            <person name="Wahlestedt C."/>
            <person name="Mattick J.S."/>
            <person name="Hume D.A."/>
            <person name="Kai C."/>
            <person name="Sasaki D."/>
            <person name="Tomaru Y."/>
            <person name="Fukuda S."/>
            <person name="Kanamori-Katayama M."/>
            <person name="Suzuki M."/>
            <person name="Aoki J."/>
            <person name="Arakawa T."/>
            <person name="Iida J."/>
            <person name="Imamura K."/>
            <person name="Itoh M."/>
            <person name="Kato T."/>
            <person name="Kawaji H."/>
            <person name="Kawagashira N."/>
            <person name="Kawashima T."/>
            <person name="Kojima M."/>
            <person name="Kondo S."/>
            <person name="Konno H."/>
            <person name="Nakano K."/>
            <person name="Ninomiya N."/>
            <person name="Nishio T."/>
            <person name="Okada M."/>
            <person name="Plessy C."/>
            <person name="Shibata K."/>
            <person name="Shiraki T."/>
            <person name="Suzuki S."/>
            <person name="Tagami M."/>
            <person name="Waki K."/>
            <person name="Watahiki A."/>
            <person name="Okamura-Oho Y."/>
            <person name="Suzuki H."/>
            <person name="Kawai J."/>
            <person name="Hayashizaki Y."/>
        </authorList>
    </citation>
    <scope>NUCLEOTIDE SEQUENCE [LARGE SCALE MRNA]</scope>
    <source>
        <strain>C57BL/6J</strain>
        <tissue>Bone</tissue>
    </source>
</reference>
<reference key="4">
    <citation type="journal article" date="2004" name="Genome Res.">
        <title>The status, quality, and expansion of the NIH full-length cDNA project: the Mammalian Gene Collection (MGC).</title>
        <authorList>
            <consortium name="The MGC Project Team"/>
        </authorList>
    </citation>
    <scope>NUCLEOTIDE SEQUENCE [LARGE SCALE MRNA]</scope>
    <source>
        <tissue>Limb</tissue>
    </source>
</reference>
<reference key="5">
    <citation type="journal article" date="2010" name="Cell">
        <title>A tissue-specific atlas of mouse protein phosphorylation and expression.</title>
        <authorList>
            <person name="Huttlin E.L."/>
            <person name="Jedrychowski M.P."/>
            <person name="Elias J.E."/>
            <person name="Goswami T."/>
            <person name="Rad R."/>
            <person name="Beausoleil S.A."/>
            <person name="Villen J."/>
            <person name="Haas W."/>
            <person name="Sowa M.E."/>
            <person name="Gygi S.P."/>
        </authorList>
    </citation>
    <scope>IDENTIFICATION BY MASS SPECTROMETRY [LARGE SCALE ANALYSIS]</scope>
    <source>
        <tissue>Lung</tissue>
        <tissue>Spleen</tissue>
    </source>
</reference>
<organism>
    <name type="scientific">Mus musculus</name>
    <name type="common">Mouse</name>
    <dbReference type="NCBI Taxonomy" id="10090"/>
    <lineage>
        <taxon>Eukaryota</taxon>
        <taxon>Metazoa</taxon>
        <taxon>Chordata</taxon>
        <taxon>Craniata</taxon>
        <taxon>Vertebrata</taxon>
        <taxon>Euteleostomi</taxon>
        <taxon>Mammalia</taxon>
        <taxon>Eutheria</taxon>
        <taxon>Euarchontoglires</taxon>
        <taxon>Glires</taxon>
        <taxon>Rodentia</taxon>
        <taxon>Myomorpha</taxon>
        <taxon>Muroidea</taxon>
        <taxon>Muridae</taxon>
        <taxon>Murinae</taxon>
        <taxon>Mus</taxon>
        <taxon>Mus</taxon>
    </lineage>
</organism>
<accession>Q8VHR0</accession>
<accession>Q69ZG2</accession>
<accession>Q80VY4</accession>
<accession>Q8CB88</accession>
<sequence length="1134" mass="125420">MHQMNTKMHFRFALALLMAFFSHDVLAKNLKYRIYEEQRVGSVIARLSEDVADVLLKLPNPSAVRFRAMPRGNSPLLVVNENTGEISIGAKIDREQLCQKNLNCSIEFDVLTLPTEHLQLFHIEVDVLDINDNSPQFSRPVIPIEISESAAVGTRIPLDSAFDPDVGENSLHTYSLSANDYFNIEVRTRTDGAKYAELIVVKELDRELKASYELQLTASDMGVPQRSGSSILKISISDSNDNSPAFEQPSYTIQLLENSPVGTLLLDLNATDPDEGANGRIVYSFSSHVSPKIIETFKIDSEKGHLTLFKPVDYEITKSYEIDVQAQDLGPNSIPAHCKIIIKVVDVNDNKPEISINLMSPGKEEVSYVFEGDPIDTFVAIVRVQDKDSGLNGEIICKLHGHGHFKLQKTYENNYLILTNATLDREKRSEYSLTVIAEDKGTPSLSSVRHFTVQINDINDNPPRFQRSRYEFVISENNSPGAYITTVTATDPDLGENGHVTYTILESFVLGSSITTYVTIDPSNGAIYALRIFDHEEVSQITFVVEARDGGSQKQLSSNTTVVLTIIDENDNVPVVIGPAMHNNTAEISIPKGAESGFHVTRIRVVDRDSGANAEFSCSIVSGNEENIFIMDPRSCDIHTNVSMESIPSAEWALSVIIQDKGSPPLHTKVLLRCMVFDYAESVTSTAMTSVSRASLDVSMIIIISLGAICAVLLVIMVLFATRCNREKKDTRSYNCRVAESTYQHHPKRPSRQIHKGDITLVPTINGTLPIRSHHRSSPSSSPTLERGQMGSRQSHNSHQSLNSLVTISSNHVPENFSLELTHATPAVEVSQLLSMLHQGQYQPRPSFRGNKYSRSYRYALQDMDKFSLKDSGRGDSEAGDSDYDLGRDSPIDRLLGEGFSDLFLTDGRIPAAMRLCTEECRVLGHSDQCWMPPLPSPSSDYRSNMFIPGEEFPAQPQQQHSHQGLDDDSQPAENGEKKKSFSTFGKDSPSDEDSGDSSTSSLLSEMSSVFQRLLPASLDTFSECNEGDRSNSLERRKGPAQGKTGGYPQGVAAWAASTHFQNPTSSSGTPLGTHSSVQPSSKWLPAMEEIPENYEEDDFDNVLNHLSDGKHELMDASELVAEINKLLQDVRQS</sequence>
<evidence type="ECO:0000250" key="1"/>
<evidence type="ECO:0000255" key="2"/>
<evidence type="ECO:0000255" key="3">
    <source>
        <dbReference type="PROSITE-ProRule" id="PRU00043"/>
    </source>
</evidence>
<evidence type="ECO:0000256" key="4">
    <source>
        <dbReference type="SAM" id="MobiDB-lite"/>
    </source>
</evidence>
<evidence type="ECO:0000269" key="5">
    <source>
    </source>
</evidence>
<evidence type="ECO:0000305" key="6"/>
<gene>
    <name type="primary">Pcdh18</name>
    <name type="synonym">Kiaa1562</name>
</gene>
<name>PCD18_MOUSE</name>
<comment type="function">
    <text>Potential calcium-dependent cell-adhesion protein.</text>
</comment>
<comment type="subunit">
    <text evidence="5">Interacts with DAB1.</text>
</comment>
<comment type="interaction">
    <interactant intactId="EBI-399910">
        <id>Q8VHR0</id>
    </interactant>
    <interactant intactId="EBI-81680">
        <id>P97318</id>
        <label>Dab1</label>
    </interactant>
    <organismsDiffer>false</organismsDiffer>
    <experiments>2</experiments>
</comment>
<comment type="subcellular location">
    <subcellularLocation>
        <location evidence="1">Cell membrane</location>
        <topology evidence="1">Single-pass type I membrane protein</topology>
    </subcellularLocation>
</comment>
<comment type="tissue specificity">
    <text evidence="5">Predominantly expressed in kidney and lung.</text>
</comment>
<comment type="developmental stage">
    <text evidence="5">Expressed at high levels throughout the developing embryo, except in the heart and liver. In the developing brain, expressed at high levels in the ventricular zone (vz) in the forebrain and midbrain. Expression in the developing brain is maximal around birth and gradually decreases until it is completely absent from the adult brain.</text>
</comment>
<comment type="sequence caution" evidence="6">
    <conflict type="erroneous initiation">
        <sequence resource="EMBL-CDS" id="BAD32482"/>
    </conflict>
</comment>
<keyword id="KW-0106">Calcium</keyword>
<keyword id="KW-0130">Cell adhesion</keyword>
<keyword id="KW-1003">Cell membrane</keyword>
<keyword id="KW-0325">Glycoprotein</keyword>
<keyword id="KW-0472">Membrane</keyword>
<keyword id="KW-1185">Reference proteome</keyword>
<keyword id="KW-0677">Repeat</keyword>
<keyword id="KW-0732">Signal</keyword>
<keyword id="KW-0812">Transmembrane</keyword>
<keyword id="KW-1133">Transmembrane helix</keyword>
<proteinExistence type="evidence at protein level"/>